<comment type="function">
    <text evidence="1">Binds 16S rRNA, required for the assembly of 30S particles and may also be responsible for determining the conformation of the 16S rRNA at the A site.</text>
</comment>
<comment type="cofactor">
    <cofactor evidence="1">
        <name>Zn(2+)</name>
        <dbReference type="ChEBI" id="CHEBI:29105"/>
    </cofactor>
    <text evidence="1">Binds 1 zinc ion per subunit.</text>
</comment>
<comment type="subunit">
    <text evidence="1">Part of the 30S ribosomal subunit. Contacts proteins S3 and S10.</text>
</comment>
<comment type="similarity">
    <text evidence="1">Belongs to the universal ribosomal protein uS14 family. Zinc-binding uS14 subfamily.</text>
</comment>
<reference key="1">
    <citation type="journal article" date="2008" name="J. Bacteriol.">
        <title>The genome of Heliobacterium modesticaldum, a phototrophic representative of the Firmicutes containing the simplest photosynthetic apparatus.</title>
        <authorList>
            <person name="Sattley W.M."/>
            <person name="Madigan M.T."/>
            <person name="Swingley W.D."/>
            <person name="Cheung P.C."/>
            <person name="Clocksin K.M."/>
            <person name="Conrad A.L."/>
            <person name="Dejesa L.C."/>
            <person name="Honchak B.M."/>
            <person name="Jung D.O."/>
            <person name="Karbach L.E."/>
            <person name="Kurdoglu A."/>
            <person name="Lahiri S."/>
            <person name="Mastrian S.D."/>
            <person name="Page L.E."/>
            <person name="Taylor H.L."/>
            <person name="Wang Z.T."/>
            <person name="Raymond J."/>
            <person name="Chen M."/>
            <person name="Blankenship R.E."/>
            <person name="Touchman J.W."/>
        </authorList>
    </citation>
    <scope>NUCLEOTIDE SEQUENCE [LARGE SCALE GENOMIC DNA]</scope>
    <source>
        <strain>ATCC 51547 / Ice1</strain>
    </source>
</reference>
<sequence length="61" mass="7119">MAKTSMIVKQSRTPKFRVRAHNRCKICGRPHAYMRKFGMCRICFRNLAYKGEIPGVTKASW</sequence>
<feature type="chain" id="PRO_1000143906" description="Small ribosomal subunit protein uS14">
    <location>
        <begin position="1"/>
        <end position="61"/>
    </location>
</feature>
<feature type="binding site" evidence="1">
    <location>
        <position position="24"/>
    </location>
    <ligand>
        <name>Zn(2+)</name>
        <dbReference type="ChEBI" id="CHEBI:29105"/>
    </ligand>
</feature>
<feature type="binding site" evidence="1">
    <location>
        <position position="27"/>
    </location>
    <ligand>
        <name>Zn(2+)</name>
        <dbReference type="ChEBI" id="CHEBI:29105"/>
    </ligand>
</feature>
<feature type="binding site" evidence="1">
    <location>
        <position position="40"/>
    </location>
    <ligand>
        <name>Zn(2+)</name>
        <dbReference type="ChEBI" id="CHEBI:29105"/>
    </ligand>
</feature>
<feature type="binding site" evidence="1">
    <location>
        <position position="43"/>
    </location>
    <ligand>
        <name>Zn(2+)</name>
        <dbReference type="ChEBI" id="CHEBI:29105"/>
    </ligand>
</feature>
<organism>
    <name type="scientific">Heliobacterium modesticaldum (strain ATCC 51547 / Ice1)</name>
    <dbReference type="NCBI Taxonomy" id="498761"/>
    <lineage>
        <taxon>Bacteria</taxon>
        <taxon>Bacillati</taxon>
        <taxon>Bacillota</taxon>
        <taxon>Clostridia</taxon>
        <taxon>Eubacteriales</taxon>
        <taxon>Heliobacteriaceae</taxon>
        <taxon>Heliomicrobium</taxon>
    </lineage>
</organism>
<keyword id="KW-0479">Metal-binding</keyword>
<keyword id="KW-1185">Reference proteome</keyword>
<keyword id="KW-0687">Ribonucleoprotein</keyword>
<keyword id="KW-0689">Ribosomal protein</keyword>
<keyword id="KW-0694">RNA-binding</keyword>
<keyword id="KW-0699">rRNA-binding</keyword>
<keyword id="KW-0862">Zinc</keyword>
<proteinExistence type="inferred from homology"/>
<gene>
    <name evidence="1" type="primary">rpsZ</name>
    <name evidence="1" type="synonym">rpsN</name>
    <name type="ordered locus">Helmi_13430</name>
    <name type="ORF">HM1_1391</name>
</gene>
<name>RS14Z_HELMI</name>
<protein>
    <recommendedName>
        <fullName evidence="1">Small ribosomal subunit protein uS14</fullName>
    </recommendedName>
    <alternativeName>
        <fullName evidence="2">30S ribosomal protein S14 type Z</fullName>
    </alternativeName>
</protein>
<dbReference type="EMBL" id="CP000930">
    <property type="protein sequence ID" value="ABZ83968.1"/>
    <property type="molecule type" value="Genomic_DNA"/>
</dbReference>
<dbReference type="RefSeq" id="WP_012282484.1">
    <property type="nucleotide sequence ID" value="NC_010337.2"/>
</dbReference>
<dbReference type="SMR" id="B0TC69"/>
<dbReference type="STRING" id="498761.HM1_1391"/>
<dbReference type="KEGG" id="hmo:HM1_1391"/>
<dbReference type="eggNOG" id="COG0199">
    <property type="taxonomic scope" value="Bacteria"/>
</dbReference>
<dbReference type="HOGENOM" id="CLU_139869_3_0_9"/>
<dbReference type="OrthoDB" id="9810484at2"/>
<dbReference type="Proteomes" id="UP000008550">
    <property type="component" value="Chromosome"/>
</dbReference>
<dbReference type="GO" id="GO:0005737">
    <property type="term" value="C:cytoplasm"/>
    <property type="evidence" value="ECO:0007669"/>
    <property type="project" value="UniProtKB-ARBA"/>
</dbReference>
<dbReference type="GO" id="GO:0015935">
    <property type="term" value="C:small ribosomal subunit"/>
    <property type="evidence" value="ECO:0007669"/>
    <property type="project" value="TreeGrafter"/>
</dbReference>
<dbReference type="GO" id="GO:0019843">
    <property type="term" value="F:rRNA binding"/>
    <property type="evidence" value="ECO:0007669"/>
    <property type="project" value="UniProtKB-UniRule"/>
</dbReference>
<dbReference type="GO" id="GO:0003735">
    <property type="term" value="F:structural constituent of ribosome"/>
    <property type="evidence" value="ECO:0007669"/>
    <property type="project" value="InterPro"/>
</dbReference>
<dbReference type="GO" id="GO:0008270">
    <property type="term" value="F:zinc ion binding"/>
    <property type="evidence" value="ECO:0007669"/>
    <property type="project" value="UniProtKB-UniRule"/>
</dbReference>
<dbReference type="GO" id="GO:0006412">
    <property type="term" value="P:translation"/>
    <property type="evidence" value="ECO:0007669"/>
    <property type="project" value="UniProtKB-UniRule"/>
</dbReference>
<dbReference type="FunFam" id="4.10.830.10:FF:000001">
    <property type="entry name" value="30S ribosomal protein S14 type Z"/>
    <property type="match status" value="1"/>
</dbReference>
<dbReference type="Gene3D" id="4.10.830.10">
    <property type="entry name" value="30s Ribosomal Protein S14, Chain N"/>
    <property type="match status" value="1"/>
</dbReference>
<dbReference type="HAMAP" id="MF_01364_B">
    <property type="entry name" value="Ribosomal_uS14_2_B"/>
    <property type="match status" value="1"/>
</dbReference>
<dbReference type="InterPro" id="IPR001209">
    <property type="entry name" value="Ribosomal_uS14"/>
</dbReference>
<dbReference type="InterPro" id="IPR023053">
    <property type="entry name" value="Ribosomal_uS14_bact"/>
</dbReference>
<dbReference type="InterPro" id="IPR018271">
    <property type="entry name" value="Ribosomal_uS14_CS"/>
</dbReference>
<dbReference type="InterPro" id="IPR043140">
    <property type="entry name" value="Ribosomal_uS14_sf"/>
</dbReference>
<dbReference type="NCBIfam" id="NF005974">
    <property type="entry name" value="PRK08061.1"/>
    <property type="match status" value="1"/>
</dbReference>
<dbReference type="PANTHER" id="PTHR19836">
    <property type="entry name" value="30S RIBOSOMAL PROTEIN S14"/>
    <property type="match status" value="1"/>
</dbReference>
<dbReference type="PANTHER" id="PTHR19836:SF19">
    <property type="entry name" value="SMALL RIBOSOMAL SUBUNIT PROTEIN US14M"/>
    <property type="match status" value="1"/>
</dbReference>
<dbReference type="Pfam" id="PF00253">
    <property type="entry name" value="Ribosomal_S14"/>
    <property type="match status" value="1"/>
</dbReference>
<dbReference type="SUPFAM" id="SSF57716">
    <property type="entry name" value="Glucocorticoid receptor-like (DNA-binding domain)"/>
    <property type="match status" value="1"/>
</dbReference>
<dbReference type="PROSITE" id="PS00527">
    <property type="entry name" value="RIBOSOMAL_S14"/>
    <property type="match status" value="1"/>
</dbReference>
<evidence type="ECO:0000255" key="1">
    <source>
        <dbReference type="HAMAP-Rule" id="MF_01364"/>
    </source>
</evidence>
<evidence type="ECO:0000305" key="2"/>
<accession>B0TC69</accession>